<protein>
    <recommendedName>
        <fullName evidence="1">Small ribosomal subunit protein bS16c</fullName>
    </recommendedName>
    <alternativeName>
        <fullName evidence="2">30S ribosomal protein S16, chloroplastic</fullName>
    </alternativeName>
</protein>
<accession>P49503</accession>
<keyword id="KW-0150">Chloroplast</keyword>
<keyword id="KW-0934">Plastid</keyword>
<keyword id="KW-0687">Ribonucleoprotein</keyword>
<keyword id="KW-0689">Ribosomal protein</keyword>
<proteinExistence type="inferred from homology"/>
<gene>
    <name evidence="1" type="primary">rps16</name>
</gene>
<geneLocation type="chloroplast"/>
<feature type="chain" id="PRO_0000167309" description="Small ribosomal subunit protein bS16c">
    <location>
        <begin position="1"/>
        <end position="79"/>
    </location>
</feature>
<sequence>MLKLRLKRSGRKKQPSYRLVVMENTTRRDGRPVEQVGYYNTITKESYFDVIKIKKWLNYGAKPTQTVLNLLKKAKIIDQ</sequence>
<organism>
    <name type="scientific">Trieres chinensis</name>
    <name type="common">Marine centric diatom</name>
    <name type="synonym">Odontella sinensis</name>
    <dbReference type="NCBI Taxonomy" id="1514140"/>
    <lineage>
        <taxon>Eukaryota</taxon>
        <taxon>Sar</taxon>
        <taxon>Stramenopiles</taxon>
        <taxon>Ochrophyta</taxon>
        <taxon>Bacillariophyta</taxon>
        <taxon>Mediophyceae</taxon>
        <taxon>Biddulphiophycidae</taxon>
        <taxon>Eupodiscales</taxon>
        <taxon>Parodontellaceae</taxon>
        <taxon>Trieres</taxon>
    </lineage>
</organism>
<reference key="1">
    <citation type="journal article" date="1995" name="Plant Mol. Biol. Rep.">
        <title>The chloroplast genome of a chlorophyll a+c-containing alga, Odontella sinensis.</title>
        <authorList>
            <person name="Kowallik K.V."/>
            <person name="Stoebe B."/>
            <person name="Schaffran I."/>
            <person name="Kroth-Pancic P."/>
            <person name="Freier U."/>
        </authorList>
    </citation>
    <scope>NUCLEOTIDE SEQUENCE [LARGE SCALE GENOMIC DNA]</scope>
</reference>
<dbReference type="EMBL" id="Z67753">
    <property type="protein sequence ID" value="CAA91655.1"/>
    <property type="molecule type" value="Genomic_DNA"/>
</dbReference>
<dbReference type="PIR" id="S78282">
    <property type="entry name" value="S78282"/>
</dbReference>
<dbReference type="RefSeq" id="NP_043623.1">
    <property type="nucleotide sequence ID" value="NC_001713.1"/>
</dbReference>
<dbReference type="SMR" id="P49503"/>
<dbReference type="GeneID" id="801746"/>
<dbReference type="GO" id="GO:0009507">
    <property type="term" value="C:chloroplast"/>
    <property type="evidence" value="ECO:0007669"/>
    <property type="project" value="UniProtKB-SubCell"/>
</dbReference>
<dbReference type="GO" id="GO:0005739">
    <property type="term" value="C:mitochondrion"/>
    <property type="evidence" value="ECO:0007669"/>
    <property type="project" value="GOC"/>
</dbReference>
<dbReference type="GO" id="GO:0015935">
    <property type="term" value="C:small ribosomal subunit"/>
    <property type="evidence" value="ECO:0007669"/>
    <property type="project" value="TreeGrafter"/>
</dbReference>
<dbReference type="GO" id="GO:0003735">
    <property type="term" value="F:structural constituent of ribosome"/>
    <property type="evidence" value="ECO:0007669"/>
    <property type="project" value="InterPro"/>
</dbReference>
<dbReference type="GO" id="GO:0032543">
    <property type="term" value="P:mitochondrial translation"/>
    <property type="evidence" value="ECO:0007669"/>
    <property type="project" value="TreeGrafter"/>
</dbReference>
<dbReference type="Gene3D" id="3.30.1320.10">
    <property type="match status" value="1"/>
</dbReference>
<dbReference type="HAMAP" id="MF_00385">
    <property type="entry name" value="Ribosomal_bS16"/>
    <property type="match status" value="1"/>
</dbReference>
<dbReference type="InterPro" id="IPR000307">
    <property type="entry name" value="Ribosomal_bS16"/>
</dbReference>
<dbReference type="InterPro" id="IPR020592">
    <property type="entry name" value="Ribosomal_bS16_CS"/>
</dbReference>
<dbReference type="InterPro" id="IPR023803">
    <property type="entry name" value="Ribosomal_bS16_dom_sf"/>
</dbReference>
<dbReference type="NCBIfam" id="TIGR00002">
    <property type="entry name" value="S16"/>
    <property type="match status" value="1"/>
</dbReference>
<dbReference type="PANTHER" id="PTHR12919">
    <property type="entry name" value="30S RIBOSOMAL PROTEIN S16"/>
    <property type="match status" value="1"/>
</dbReference>
<dbReference type="PANTHER" id="PTHR12919:SF20">
    <property type="entry name" value="SMALL RIBOSOMAL SUBUNIT PROTEIN BS16M"/>
    <property type="match status" value="1"/>
</dbReference>
<dbReference type="Pfam" id="PF00886">
    <property type="entry name" value="Ribosomal_S16"/>
    <property type="match status" value="1"/>
</dbReference>
<dbReference type="SUPFAM" id="SSF54565">
    <property type="entry name" value="Ribosomal protein S16"/>
    <property type="match status" value="1"/>
</dbReference>
<dbReference type="PROSITE" id="PS00732">
    <property type="entry name" value="RIBOSOMAL_S16"/>
    <property type="match status" value="1"/>
</dbReference>
<comment type="subcellular location">
    <subcellularLocation>
        <location>Plastid</location>
        <location>Chloroplast</location>
    </subcellularLocation>
</comment>
<comment type="similarity">
    <text evidence="1">Belongs to the bacterial ribosomal protein bS16 family.</text>
</comment>
<name>RR16_TRICV</name>
<evidence type="ECO:0000255" key="1">
    <source>
        <dbReference type="HAMAP-Rule" id="MF_00385"/>
    </source>
</evidence>
<evidence type="ECO:0000305" key="2"/>